<accession>P26105</accession>
<dbReference type="EMBL" id="M73526">
    <property type="protein sequence ID" value="AAA43133.1"/>
    <property type="molecule type" value="Genomic_RNA"/>
</dbReference>
<dbReference type="SMR" id="P26105"/>
<dbReference type="GO" id="GO:0042025">
    <property type="term" value="C:host cell nucleus"/>
    <property type="evidence" value="ECO:0007669"/>
    <property type="project" value="UniProtKB-SubCell"/>
</dbReference>
<dbReference type="GO" id="GO:0044423">
    <property type="term" value="C:virion component"/>
    <property type="evidence" value="ECO:0007669"/>
    <property type="project" value="UniProtKB-UniRule"/>
</dbReference>
<dbReference type="GO" id="GO:0003723">
    <property type="term" value="F:RNA binding"/>
    <property type="evidence" value="ECO:0007669"/>
    <property type="project" value="UniProtKB-UniRule"/>
</dbReference>
<dbReference type="GO" id="GO:0003968">
    <property type="term" value="F:RNA-directed RNA polymerase activity"/>
    <property type="evidence" value="ECO:0007669"/>
    <property type="project" value="UniProtKB-UniRule"/>
</dbReference>
<dbReference type="GO" id="GO:0006370">
    <property type="term" value="P:7-methylguanosine mRNA capping"/>
    <property type="evidence" value="ECO:0007669"/>
    <property type="project" value="UniProtKB-UniRule"/>
</dbReference>
<dbReference type="GO" id="GO:0075526">
    <property type="term" value="P:cap snatching"/>
    <property type="evidence" value="ECO:0007669"/>
    <property type="project" value="UniProtKB-UniRule"/>
</dbReference>
<dbReference type="GO" id="GO:0006351">
    <property type="term" value="P:DNA-templated transcription"/>
    <property type="evidence" value="ECO:0007669"/>
    <property type="project" value="UniProtKB-UniRule"/>
</dbReference>
<dbReference type="GO" id="GO:0039657">
    <property type="term" value="P:symbiont-mediated suppression of host gene expression"/>
    <property type="evidence" value="ECO:0007669"/>
    <property type="project" value="UniProtKB-KW"/>
</dbReference>
<dbReference type="GO" id="GO:0039523">
    <property type="term" value="P:symbiont-mediated suppression of host mRNA transcription via inhibition of RNA polymerase II activity"/>
    <property type="evidence" value="ECO:0007669"/>
    <property type="project" value="UniProtKB-UniRule"/>
</dbReference>
<dbReference type="GO" id="GO:0039694">
    <property type="term" value="P:viral RNA genome replication"/>
    <property type="evidence" value="ECO:0007669"/>
    <property type="project" value="InterPro"/>
</dbReference>
<dbReference type="Gene3D" id="3.30.30.90">
    <property type="entry name" value="Polymerase Basic Protein 2, C-terminal domain"/>
    <property type="match status" value="1"/>
</dbReference>
<dbReference type="HAMAP" id="MF_04062">
    <property type="entry name" value="INV_PB2"/>
    <property type="match status" value="1"/>
</dbReference>
<dbReference type="InterPro" id="IPR049110">
    <property type="entry name" value="Flu_PB2_2nd"/>
</dbReference>
<dbReference type="InterPro" id="IPR049114">
    <property type="entry name" value="Flu_PB2_6th"/>
</dbReference>
<dbReference type="InterPro" id="IPR049115">
    <property type="entry name" value="Flu_PB2_C"/>
</dbReference>
<dbReference type="InterPro" id="IPR048298">
    <property type="entry name" value="Flu_PB2_CAP-bd"/>
</dbReference>
<dbReference type="InterPro" id="IPR049111">
    <property type="entry name" value="Flu_PB2_middle"/>
</dbReference>
<dbReference type="InterPro" id="IPR049106">
    <property type="entry name" value="Flu_PB2_N"/>
</dbReference>
<dbReference type="InterPro" id="IPR001591">
    <property type="entry name" value="INV_PB2"/>
</dbReference>
<dbReference type="InterPro" id="IPR049113">
    <property type="entry name" value="PB2_helical"/>
</dbReference>
<dbReference type="InterPro" id="IPR037258">
    <property type="entry name" value="PDB2_C"/>
</dbReference>
<dbReference type="Pfam" id="PF20947">
    <property type="entry name" value="Flu_PB2_1st"/>
    <property type="match status" value="1"/>
</dbReference>
<dbReference type="Pfam" id="PF20948">
    <property type="entry name" value="Flu_PB2_2nd"/>
    <property type="match status" value="1"/>
</dbReference>
<dbReference type="Pfam" id="PF20949">
    <property type="entry name" value="Flu_PB2_3rd"/>
    <property type="match status" value="1"/>
</dbReference>
<dbReference type="Pfam" id="PF20950">
    <property type="entry name" value="Flu_PB2_4th"/>
    <property type="match status" value="1"/>
</dbReference>
<dbReference type="Pfam" id="PF00604">
    <property type="entry name" value="Flu_PB2_5th"/>
    <property type="match status" value="1"/>
</dbReference>
<dbReference type="Pfam" id="PF20951">
    <property type="entry name" value="Flu_PB2_6th"/>
    <property type="match status" value="1"/>
</dbReference>
<dbReference type="Pfam" id="PF20952">
    <property type="entry name" value="Flu_PB2_7th"/>
    <property type="match status" value="1"/>
</dbReference>
<dbReference type="SUPFAM" id="SSF160453">
    <property type="entry name" value="PB2 C-terminal domain-like"/>
    <property type="match status" value="1"/>
</dbReference>
<feature type="chain" id="PRO_0000078821" description="Polymerase basic protein 2">
    <location>
        <begin position="1"/>
        <end position="759"/>
    </location>
</feature>
<feature type="short sequence motif" description="Nuclear localization signal" evidence="1">
    <location>
        <begin position="736"/>
        <end position="739"/>
    </location>
</feature>
<feature type="site" description="Avian adaptation" evidence="1">
    <location>
        <position position="627"/>
    </location>
</feature>
<protein>
    <recommendedName>
        <fullName evidence="1">Polymerase basic protein 2</fullName>
    </recommendedName>
    <alternativeName>
        <fullName evidence="1">RNA-directed RNA polymerase subunit P3</fullName>
    </alternativeName>
</protein>
<comment type="function">
    <text evidence="1">Plays an essential role in transcription initiation and cap-stealing mechanism, in which cellular capped pre-mRNAs are used to generate primers for viral transcription. Recognizes and binds the 7-methylguanosine-containing cap of the target pre-RNA which is subsequently cleaved after 10-13 nucleotides by the viral protein PA. Plays a role in the initiation of the viral genome replication and modulates the activity of the ribonucleoprotein (RNP) complex.</text>
</comment>
<comment type="subunit">
    <text evidence="1">Influenza RNA polymerase is composed of three subunits: PB1, PB2 and PA. Interacts (via N-terminus) with PB1 (via C-terminus). Interacts with nucleoprotein NP (via N-terminus).</text>
</comment>
<comment type="subcellular location">
    <subcellularLocation>
        <location evidence="1">Virion</location>
    </subcellularLocation>
    <subcellularLocation>
        <location evidence="1">Host nucleus</location>
    </subcellularLocation>
</comment>
<comment type="similarity">
    <text evidence="1">Belongs to the influenza viruses PB2 family.</text>
</comment>
<reference key="1">
    <citation type="journal article" date="1990" name="J. Virol.">
        <title>Evolution of influenza A virus PB2 genes: implications for evolution of the ribonucleoprotein complex and origin of human influenza A virus.</title>
        <authorList>
            <person name="Gorman O.T."/>
            <person name="Donis R.O."/>
            <person name="Kawaoka Y."/>
            <person name="Webster R.G."/>
        </authorList>
    </citation>
    <scope>NUCLEOTIDE SEQUENCE [GENOMIC RNA]</scope>
</reference>
<keyword id="KW-1157">Cap snatching</keyword>
<keyword id="KW-1262">Eukaryotic host gene expression shutoff by virus</keyword>
<keyword id="KW-1191">Eukaryotic host transcription shutoff by virus</keyword>
<keyword id="KW-1190">Host gene expression shutoff by virus</keyword>
<keyword id="KW-1048">Host nucleus</keyword>
<keyword id="KW-0945">Host-virus interaction</keyword>
<keyword id="KW-1104">Inhibition of host RNA polymerase II by virus</keyword>
<keyword id="KW-0506">mRNA capping</keyword>
<keyword id="KW-0507">mRNA processing</keyword>
<keyword id="KW-1195">Viral transcription</keyword>
<keyword id="KW-0946">Virion</keyword>
<name>PB2_I86A2</name>
<organismHost>
    <name type="scientific">Aves</name>
    <dbReference type="NCBI Taxonomy" id="8782"/>
</organismHost>
<organismHost>
    <name type="scientific">Equus caballus</name>
    <name type="common">Horse</name>
    <dbReference type="NCBI Taxonomy" id="9796"/>
</organismHost>
<evidence type="ECO:0000255" key="1">
    <source>
        <dbReference type="HAMAP-Rule" id="MF_04062"/>
    </source>
</evidence>
<sequence length="759" mass="86051">MERIKELRDLMSQSRTREILTKTTVDHMAIIKKYTSGRQEKNPALRMKWMMAMKYPITADKRIMEMIPERNEQGQTLWSKTNDAGSDRVMVSPLAVTWWNRNGPTTSTIHYPKVYKTYFEKVERLKHGTFGPVHFRNQVKIRRRVDVNPGHADLSAKEAQDVIMEVVFPNEVGARILTSESQLTITKEKKEELQDCKIAPLMVAYMLERELVRKTRFLPVAGGTSSVYIEVLHLTQGTCWEQMYTPGGEVRNDDIDQSLIIAARNIVKRATVSADPLASLLEMCHSTQIGGIRMVDILKQNPTEEQAVDICKAAMGLRISSSFSFGGFTFKRTSGSSVKREEEMLTGNLQTLKIRVHEGYEEFTMVGRRATAILRKTTRRLIQLIVSGRDEQSIAEAIIVAMVFSQEDCMIKAVRGDLNFVNRANQRLNPMHQLLRHFQKDAKVLFQNWGIEPIDNVMGMIGILPDMTPSTEMSLRGVRVSKMGVDEYSSTERVVVSIDRFLRVRDQRGNILLSPEEVSETQGTEKLTIIYSSSMMWEINGPESVLVNTYQWIIRNWEIVKIQWSQDPTMLYNKIEFEPFQSLVPRATRSQYSGFVRTLFQQMRDVLGTFDTAQIIKLLPFAAAPPEQSRMQFSSLTVNVRGSGMRILVRGNSPVFNYNKATKRLTVLGKDAGALTEDPDEGTAGVESAVLRGFLILGKENKRYGPALSINELSKLTKGEKANVLIGQGDVVLVMKRKRDSSILTDSQTATKRIRMAIN</sequence>
<organism>
    <name type="scientific">Influenza A virus (strain A/Equine/Kentucky/2/1986 H3N8)</name>
    <dbReference type="NCBI Taxonomy" id="385605"/>
    <lineage>
        <taxon>Viruses</taxon>
        <taxon>Riboviria</taxon>
        <taxon>Orthornavirae</taxon>
        <taxon>Negarnaviricota</taxon>
        <taxon>Polyploviricotina</taxon>
        <taxon>Insthoviricetes</taxon>
        <taxon>Articulavirales</taxon>
        <taxon>Orthomyxoviridae</taxon>
        <taxon>Alphainfluenzavirus</taxon>
        <taxon>Alphainfluenzavirus influenzae</taxon>
        <taxon>Influenza A virus</taxon>
    </lineage>
</organism>
<gene>
    <name evidence="1" type="primary">PB2</name>
</gene>
<proteinExistence type="inferred from homology"/>